<proteinExistence type="inferred from homology"/>
<protein>
    <recommendedName>
        <fullName evidence="1">UPF0223 protein Bcer98_2663</fullName>
    </recommendedName>
</protein>
<accession>A7GRY9</accession>
<reference key="1">
    <citation type="journal article" date="2008" name="Chem. Biol. Interact.">
        <title>Extending the Bacillus cereus group genomics to putative food-borne pathogens of different toxicity.</title>
        <authorList>
            <person name="Lapidus A."/>
            <person name="Goltsman E."/>
            <person name="Auger S."/>
            <person name="Galleron N."/>
            <person name="Segurens B."/>
            <person name="Dossat C."/>
            <person name="Land M.L."/>
            <person name="Broussolle V."/>
            <person name="Brillard J."/>
            <person name="Guinebretiere M.-H."/>
            <person name="Sanchis V."/>
            <person name="Nguen-the C."/>
            <person name="Lereclus D."/>
            <person name="Richardson P."/>
            <person name="Wincker P."/>
            <person name="Weissenbach J."/>
            <person name="Ehrlich S.D."/>
            <person name="Sorokin A."/>
        </authorList>
    </citation>
    <scope>NUCLEOTIDE SEQUENCE [LARGE SCALE GENOMIC DNA]</scope>
    <source>
        <strain>DSM 22905 / CIP 110041 / 391-98 / NVH 391-98</strain>
    </source>
</reference>
<comment type="similarity">
    <text evidence="1">Belongs to the UPF0223 family.</text>
</comment>
<organism>
    <name type="scientific">Bacillus cytotoxicus (strain DSM 22905 / CIP 110041 / 391-98 / NVH 391-98)</name>
    <dbReference type="NCBI Taxonomy" id="315749"/>
    <lineage>
        <taxon>Bacteria</taxon>
        <taxon>Bacillati</taxon>
        <taxon>Bacillota</taxon>
        <taxon>Bacilli</taxon>
        <taxon>Bacillales</taxon>
        <taxon>Bacillaceae</taxon>
        <taxon>Bacillus</taxon>
        <taxon>Bacillus cereus group</taxon>
    </lineage>
</organism>
<sequence length="89" mass="10778">MEYQYPLDYDWSNEEMITVVKFYEAIERANEKGIVKEELMDLYRKFKQIVPSKAEEKKIDKEFQEVSGYSIYRTIQKGKDTEEHKIVKM</sequence>
<name>Y2663_BACCN</name>
<dbReference type="EMBL" id="CP000764">
    <property type="protein sequence ID" value="ABS22897.1"/>
    <property type="molecule type" value="Genomic_DNA"/>
</dbReference>
<dbReference type="RefSeq" id="WP_012095116.1">
    <property type="nucleotide sequence ID" value="NC_009674.1"/>
</dbReference>
<dbReference type="SMR" id="A7GRY9"/>
<dbReference type="STRING" id="315749.Bcer98_2663"/>
<dbReference type="GeneID" id="33897918"/>
<dbReference type="KEGG" id="bcy:Bcer98_2663"/>
<dbReference type="eggNOG" id="COG4476">
    <property type="taxonomic scope" value="Bacteria"/>
</dbReference>
<dbReference type="HOGENOM" id="CLU_166693_0_0_9"/>
<dbReference type="OrthoDB" id="1649074at2"/>
<dbReference type="Proteomes" id="UP000002300">
    <property type="component" value="Chromosome"/>
</dbReference>
<dbReference type="Gene3D" id="1.10.220.80">
    <property type="entry name" value="BH2638-like"/>
    <property type="match status" value="1"/>
</dbReference>
<dbReference type="HAMAP" id="MF_01041">
    <property type="entry name" value="UPF0223"/>
    <property type="match status" value="1"/>
</dbReference>
<dbReference type="InterPro" id="IPR023324">
    <property type="entry name" value="BH2638-like_sf"/>
</dbReference>
<dbReference type="InterPro" id="IPR007920">
    <property type="entry name" value="UPF0223"/>
</dbReference>
<dbReference type="NCBIfam" id="NF003353">
    <property type="entry name" value="PRK04387.1"/>
    <property type="match status" value="1"/>
</dbReference>
<dbReference type="Pfam" id="PF05256">
    <property type="entry name" value="UPF0223"/>
    <property type="match status" value="1"/>
</dbReference>
<dbReference type="PIRSF" id="PIRSF037260">
    <property type="entry name" value="UPF0223"/>
    <property type="match status" value="1"/>
</dbReference>
<dbReference type="SUPFAM" id="SSF158504">
    <property type="entry name" value="BH2638-like"/>
    <property type="match status" value="1"/>
</dbReference>
<feature type="chain" id="PRO_1000084339" description="UPF0223 protein Bcer98_2663">
    <location>
        <begin position="1"/>
        <end position="89"/>
    </location>
</feature>
<gene>
    <name type="ordered locus">Bcer98_2663</name>
</gene>
<evidence type="ECO:0000255" key="1">
    <source>
        <dbReference type="HAMAP-Rule" id="MF_01041"/>
    </source>
</evidence>